<reference key="1">
    <citation type="journal article" date="2003" name="J. Biol. Chem.">
        <title>Redox control of Hsp70-Co-chaperone interaction revealed by expression of a thioredoxin-like Arabidopsis protein.</title>
        <authorList>
            <person name="Vignols F."/>
            <person name="Mouaheb N."/>
            <person name="Thomas D."/>
            <person name="Meyer Y."/>
        </authorList>
    </citation>
    <scope>NUCLEOTIDE SEQUENCE [GENOMIC DNA / MRNA] (ISOFORM 1)</scope>
    <scope>FUNCTION</scope>
</reference>
<reference key="2">
    <citation type="journal article" date="2000" name="DNA Res.">
        <title>Structural analysis of Arabidopsis thaliana chromosome 3. I. Sequence features of the regions of 4,504,864 bp covered by sixty P1 and TAC clones.</title>
        <authorList>
            <person name="Sato S."/>
            <person name="Nakamura Y."/>
            <person name="Kaneko T."/>
            <person name="Katoh T."/>
            <person name="Asamizu E."/>
            <person name="Tabata S."/>
        </authorList>
    </citation>
    <scope>NUCLEOTIDE SEQUENCE [LARGE SCALE GENOMIC DNA]</scope>
    <source>
        <strain>cv. Columbia</strain>
    </source>
</reference>
<reference key="3">
    <citation type="journal article" date="2017" name="Plant J.">
        <title>Araport11: a complete reannotation of the Arabidopsis thaliana reference genome.</title>
        <authorList>
            <person name="Cheng C.Y."/>
            <person name="Krishnakumar V."/>
            <person name="Chan A.P."/>
            <person name="Thibaud-Nissen F."/>
            <person name="Schobel S."/>
            <person name="Town C.D."/>
        </authorList>
    </citation>
    <scope>GENOME REANNOTATION</scope>
    <source>
        <strain>cv. Columbia</strain>
    </source>
</reference>
<reference key="4">
    <citation type="submission" date="2006-07" db="EMBL/GenBank/DDBJ databases">
        <title>Large-scale analysis of RIKEN Arabidopsis full-length (RAFL) cDNAs.</title>
        <authorList>
            <person name="Totoki Y."/>
            <person name="Seki M."/>
            <person name="Ishida J."/>
            <person name="Nakajima M."/>
            <person name="Enju A."/>
            <person name="Kamiya A."/>
            <person name="Narusaka M."/>
            <person name="Shin-i T."/>
            <person name="Nakagawa M."/>
            <person name="Sakamoto N."/>
            <person name="Oishi K."/>
            <person name="Kohara Y."/>
            <person name="Kobayashi M."/>
            <person name="Toyoda A."/>
            <person name="Sakaki Y."/>
            <person name="Sakurai T."/>
            <person name="Iida K."/>
            <person name="Akiyama K."/>
            <person name="Satou M."/>
            <person name="Toyoda T."/>
            <person name="Konagaya A."/>
            <person name="Carninci P."/>
            <person name="Kawai J."/>
            <person name="Hayashizaki Y."/>
            <person name="Shinozaki K."/>
        </authorList>
    </citation>
    <scope>NUCLEOTIDE SEQUENCE [LARGE SCALE MRNA] (ISOFORM 1)</scope>
    <source>
        <strain>cv. Columbia</strain>
    </source>
</reference>
<reference key="5">
    <citation type="submission" date="2002-03" db="EMBL/GenBank/DDBJ databases">
        <title>Full-length cDNA from Arabidopsis thaliana.</title>
        <authorList>
            <person name="Brover V.V."/>
            <person name="Troukhan M.E."/>
            <person name="Alexandrov N.A."/>
            <person name="Lu Y.-P."/>
            <person name="Flavell R.B."/>
            <person name="Feldmann K.A."/>
        </authorList>
    </citation>
    <scope>NUCLEOTIDE SEQUENCE [LARGE SCALE MRNA] (ISOFORM 1)</scope>
</reference>
<reference key="6">
    <citation type="journal article" date="2003" name="Science">
        <title>Empirical analysis of transcriptional activity in the Arabidopsis genome.</title>
        <authorList>
            <person name="Yamada K."/>
            <person name="Lim J."/>
            <person name="Dale J.M."/>
            <person name="Chen H."/>
            <person name="Shinn P."/>
            <person name="Palm C.J."/>
            <person name="Southwick A.M."/>
            <person name="Wu H.C."/>
            <person name="Kim C.J."/>
            <person name="Nguyen M."/>
            <person name="Pham P.K."/>
            <person name="Cheuk R.F."/>
            <person name="Karlin-Newmann G."/>
            <person name="Liu S.X."/>
            <person name="Lam B."/>
            <person name="Sakano H."/>
            <person name="Wu T."/>
            <person name="Yu G."/>
            <person name="Miranda M."/>
            <person name="Quach H.L."/>
            <person name="Tripp M."/>
            <person name="Chang C.H."/>
            <person name="Lee J.M."/>
            <person name="Toriumi M.J."/>
            <person name="Chan M.M."/>
            <person name="Tang C.C."/>
            <person name="Onodera C.S."/>
            <person name="Deng J.M."/>
            <person name="Akiyama K."/>
            <person name="Ansari Y."/>
            <person name="Arakawa T."/>
            <person name="Banh J."/>
            <person name="Banno F."/>
            <person name="Bowser L."/>
            <person name="Brooks S.Y."/>
            <person name="Carninci P."/>
            <person name="Chao Q."/>
            <person name="Choy N."/>
            <person name="Enju A."/>
            <person name="Goldsmith A.D."/>
            <person name="Gurjal M."/>
            <person name="Hansen N.F."/>
            <person name="Hayashizaki Y."/>
            <person name="Johnson-Hopson C."/>
            <person name="Hsuan V.W."/>
            <person name="Iida K."/>
            <person name="Karnes M."/>
            <person name="Khan S."/>
            <person name="Koesema E."/>
            <person name="Ishida J."/>
            <person name="Jiang P.X."/>
            <person name="Jones T."/>
            <person name="Kawai J."/>
            <person name="Kamiya A."/>
            <person name="Meyers C."/>
            <person name="Nakajima M."/>
            <person name="Narusaka M."/>
            <person name="Seki M."/>
            <person name="Sakurai T."/>
            <person name="Satou M."/>
            <person name="Tamse R."/>
            <person name="Vaysberg M."/>
            <person name="Wallender E.K."/>
            <person name="Wong C."/>
            <person name="Yamamura Y."/>
            <person name="Yuan S."/>
            <person name="Shinozaki K."/>
            <person name="Davis R.W."/>
            <person name="Theologis A."/>
            <person name="Ecker J.R."/>
        </authorList>
    </citation>
    <scope>NUCLEOTIDE SEQUENCE [LARGE SCALE MRNA] OF 259-380</scope>
    <source>
        <strain>cv. Columbia</strain>
    </source>
</reference>
<reference key="7">
    <citation type="journal article" date="2009" name="Mol. Plant">
        <title>Comparative genomic study of the thioredoxin family in photosynthetic organisms with emphasis on Populus trichocarpa.</title>
        <authorList>
            <person name="Chibani K."/>
            <person name="Wingsle G."/>
            <person name="Jacquot J.P."/>
            <person name="Gelhaye E."/>
            <person name="Rouhier N."/>
        </authorList>
    </citation>
    <scope>GENE FAMILY</scope>
    <scope>NOMENCLATURE</scope>
</reference>
<reference key="8">
    <citation type="journal article" date="2009" name="Proc. Natl. Acad. Sci. U.S.A.">
        <title>Heat-shock dependent oligomeric status alters the function of a plant-specific thioredoxin-like protein, AtTDX.</title>
        <authorList>
            <person name="Lee J.R."/>
            <person name="Lee S.S."/>
            <person name="Jang H.H."/>
            <person name="Lee Y.M."/>
            <person name="Park J.H."/>
            <person name="Park S.C."/>
            <person name="Moon J.C."/>
            <person name="Park S.K."/>
            <person name="Kim S.Y."/>
            <person name="Lee S.Y."/>
            <person name="Chae H.B."/>
            <person name="Jung Y.J."/>
            <person name="Kim W.Y."/>
            <person name="Shin M.R."/>
            <person name="Cheong G.W."/>
            <person name="Kim M.G."/>
            <person name="Kang K.R."/>
            <person name="Lee K.O."/>
            <person name="Yun D.J."/>
            <person name="Lee S.Y."/>
        </authorList>
    </citation>
    <scope>FUNCTION</scope>
    <scope>ACTIVITY REGULATION</scope>
    <scope>SUBUNIT</scope>
    <scope>IDENTIFICATION BY MASS SPECTROMETRY</scope>
    <scope>DISRUPTION PHENOTYPE</scope>
    <scope>MUTAGENESIS OF CYS-304 AND CYS-307</scope>
</reference>
<reference key="9">
    <citation type="journal article" date="2012" name="Mol. Cell. Proteomics">
        <title>Comparative large-scale characterisation of plant vs. mammal proteins reveals similar and idiosyncratic N-alpha acetylation features.</title>
        <authorList>
            <person name="Bienvenut W.V."/>
            <person name="Sumpton D."/>
            <person name="Martinez A."/>
            <person name="Lilla S."/>
            <person name="Espagne C."/>
            <person name="Meinnel T."/>
            <person name="Giglione C."/>
        </authorList>
    </citation>
    <scope>ACETYLATION [LARGE SCALE ANALYSIS] AT VAL-2</scope>
    <scope>CLEAVAGE OF INITIATOR METHIONINE [LARGE SCALE ANALYSIS]</scope>
    <scope>IDENTIFICATION BY MASS SPECTROMETRY [LARGE SCALE ANALYSIS]</scope>
</reference>
<name>TDX_ARATH</name>
<comment type="function">
    <text evidence="4 5">Thiol-disulfide oxidoreductase that possesses insulin disulfide bonds reducing activity, disulfide reductase, foldase chaperone and holdase chaperone activities. Heat shock causes oligomerization and formation of high molecular weiht (HMW) complexes with concomitant functional switching from a disulfide reductase and foldase chaperone to a holdase chaperone. May interact with HSP70 proteins through the TPR repeats.</text>
</comment>
<comment type="subunit">
    <text evidence="5">Oligomerization under high temperature.</text>
</comment>
<comment type="interaction">
    <interactant intactId="EBI-15764744">
        <id>Q8VWG7</id>
    </interactant>
    <interactant intactId="EBI-15764744">
        <id>Q8VWG7</id>
        <label>TDX</label>
    </interactant>
    <organismsDiffer>false</organismsDiffer>
    <experiments>5</experiments>
</comment>
<comment type="alternative products">
    <event type="alternative splicing"/>
    <isoform>
        <id>Q8VWG7-1</id>
        <name>1</name>
        <sequence type="displayed"/>
    </isoform>
    <isoform>
        <id>Q8VWG7-2</id>
        <name>2</name>
        <sequence type="described" ref="VSP_039289"/>
    </isoform>
</comment>
<comment type="disruption phenotype">
    <text evidence="5">High sensitivity to heat shock.</text>
</comment>
<comment type="similarity">
    <text evidence="6">Belongs to the thioredoxin family.</text>
</comment>
<comment type="sequence caution" evidence="6">
    <conflict type="erroneous gene model prediction">
        <sequence resource="EMBL-CDS" id="BAB02710"/>
    </conflict>
    <text>Was originally thought to correspond to two different genes At3g17870 and At3g17880.</text>
</comment>
<comment type="sequence caution" evidence="6">
    <conflict type="erroneous gene model prediction">
        <sequence resource="EMBL-CDS" id="BAB02711"/>
    </conflict>
    <text>Was originally thought to correspond to two different genes At3g17870 and At3g17880.</text>
</comment>
<protein>
    <recommendedName>
        <fullName>TPR repeat-containing thioredoxin TDX</fullName>
    </recommendedName>
    <alternativeName>
        <fullName>HSP70-interacting protein 2</fullName>
        <shortName>AtHIP2</shortName>
    </alternativeName>
    <alternativeName>
        <fullName>Tetratricoredoxin</fullName>
        <shortName>AtTDX</shortName>
    </alternativeName>
</protein>
<proteinExistence type="evidence at protein level"/>
<accession>Q8VWG7</accession>
<accession>Q7XJ63</accession>
<accession>Q8LG82</accession>
<accession>Q9LVI2</accession>
<accession>Q9LVI3</accession>
<sequence length="380" mass="42846">MVDAIQVAELRRFVEQLKLNPSILHDPSLVFFKEYLRSLGAQVPKIEKTERDYEDKAETKPSFSPKHDDDDDDIMESDVELDNSDVVEPDNEPPQPMGDPTAEVTDENRDDAQSEKSKAMEAISDGRFDEAIEHLTKAVMLNPTSAILYATRASVFLKVKKPNAAIRDANVALQFNSDSAKGYKSRGMAKAMLGQWEEAAADLHVASKLDYDEEIGTMLKKVEPNAKRIEEHRRKYQRLRKEKELQRAERERRKQQEAQEREAQAALNDGEVISIHSTSELEAKTKAAKKASRLLILYFTATWCGPCRYMSPLYSNLATQHSRVVFLKVDIDKANDVAASWNISSVPTFCFIRDGKEVDKVVGADKGSLEQKIAQHSSSK</sequence>
<dbReference type="EMBL" id="AY064251">
    <property type="protein sequence ID" value="AAL54856.1"/>
    <property type="molecule type" value="mRNA"/>
</dbReference>
<dbReference type="EMBL" id="AY064252">
    <property type="protein sequence ID" value="AAL54857.1"/>
    <property type="molecule type" value="Genomic_DNA"/>
</dbReference>
<dbReference type="EMBL" id="AB019230">
    <property type="protein sequence ID" value="BAB02710.1"/>
    <property type="status" value="ALT_SEQ"/>
    <property type="molecule type" value="Genomic_DNA"/>
</dbReference>
<dbReference type="EMBL" id="AB019230">
    <property type="protein sequence ID" value="BAB02711.1"/>
    <property type="status" value="ALT_SEQ"/>
    <property type="molecule type" value="Genomic_DNA"/>
</dbReference>
<dbReference type="EMBL" id="CP002686">
    <property type="protein sequence ID" value="AEE76019.1"/>
    <property type="molecule type" value="Genomic_DNA"/>
</dbReference>
<dbReference type="EMBL" id="CP002686">
    <property type="protein sequence ID" value="AEE76020.1"/>
    <property type="molecule type" value="Genomic_DNA"/>
</dbReference>
<dbReference type="EMBL" id="AK175494">
    <property type="protein sequence ID" value="BAD43257.1"/>
    <property type="molecule type" value="mRNA"/>
</dbReference>
<dbReference type="EMBL" id="AK227340">
    <property type="protein sequence ID" value="BAE99351.1"/>
    <property type="molecule type" value="mRNA"/>
</dbReference>
<dbReference type="EMBL" id="AY084415">
    <property type="protein sequence ID" value="AAM60989.1"/>
    <property type="molecule type" value="mRNA"/>
</dbReference>
<dbReference type="EMBL" id="BT009704">
    <property type="protein sequence ID" value="AAP88338.1"/>
    <property type="molecule type" value="mRNA"/>
</dbReference>
<dbReference type="RefSeq" id="NP_001078175.1">
    <molecule id="Q8VWG7-2"/>
    <property type="nucleotide sequence ID" value="NM_001084706.1"/>
</dbReference>
<dbReference type="RefSeq" id="NP_188415.2">
    <molecule id="Q8VWG7-1"/>
    <property type="nucleotide sequence ID" value="NM_112669.4"/>
</dbReference>
<dbReference type="SMR" id="Q8VWG7"/>
<dbReference type="BioGRID" id="6389">
    <property type="interactions" value="1"/>
</dbReference>
<dbReference type="DIP" id="DIP-48783N"/>
<dbReference type="FunCoup" id="Q8VWG7">
    <property type="interactions" value="3535"/>
</dbReference>
<dbReference type="STRING" id="3702.Q8VWG7"/>
<dbReference type="iPTMnet" id="Q8VWG7"/>
<dbReference type="PaxDb" id="3702-AT3G17880.1"/>
<dbReference type="ProteomicsDB" id="246432">
    <molecule id="Q8VWG7-1"/>
</dbReference>
<dbReference type="EnsemblPlants" id="AT3G17880.1">
    <molecule id="Q8VWG7-1"/>
    <property type="protein sequence ID" value="AT3G17880.1"/>
    <property type="gene ID" value="AT3G17880"/>
</dbReference>
<dbReference type="EnsemblPlants" id="AT3G17880.2">
    <molecule id="Q8VWG7-2"/>
    <property type="protein sequence ID" value="AT3G17880.2"/>
    <property type="gene ID" value="AT3G17880"/>
</dbReference>
<dbReference type="GeneID" id="821056"/>
<dbReference type="Gramene" id="AT3G17880.1">
    <molecule id="Q8VWG7-1"/>
    <property type="protein sequence ID" value="AT3G17880.1"/>
    <property type="gene ID" value="AT3G17880"/>
</dbReference>
<dbReference type="Gramene" id="AT3G17880.2">
    <molecule id="Q8VWG7-2"/>
    <property type="protein sequence ID" value="AT3G17880.2"/>
    <property type="gene ID" value="AT3G17880"/>
</dbReference>
<dbReference type="KEGG" id="ath:AT3G17880"/>
<dbReference type="Araport" id="AT3G17880"/>
<dbReference type="TAIR" id="AT3G17880">
    <property type="gene designation" value="TDX"/>
</dbReference>
<dbReference type="eggNOG" id="KOG0907">
    <property type="taxonomic scope" value="Eukaryota"/>
</dbReference>
<dbReference type="eggNOG" id="KOG1308">
    <property type="taxonomic scope" value="Eukaryota"/>
</dbReference>
<dbReference type="InParanoid" id="Q8VWG7"/>
<dbReference type="OMA" id="VAANWNI"/>
<dbReference type="PhylomeDB" id="Q8VWG7"/>
<dbReference type="PRO" id="PR:Q8VWG7"/>
<dbReference type="Proteomes" id="UP000006548">
    <property type="component" value="Chromosome 3"/>
</dbReference>
<dbReference type="ExpressionAtlas" id="Q8VWG7">
    <property type="expression patterns" value="baseline and differential"/>
</dbReference>
<dbReference type="GO" id="GO:0000118">
    <property type="term" value="C:histone deacetylase complex"/>
    <property type="evidence" value="ECO:0000314"/>
    <property type="project" value="TAIR"/>
</dbReference>
<dbReference type="GO" id="GO:0030544">
    <property type="term" value="F:Hsp70 protein binding"/>
    <property type="evidence" value="ECO:0000314"/>
    <property type="project" value="UniProtKB"/>
</dbReference>
<dbReference type="GO" id="GO:0042802">
    <property type="term" value="F:identical protein binding"/>
    <property type="evidence" value="ECO:0000353"/>
    <property type="project" value="IntAct"/>
</dbReference>
<dbReference type="GO" id="GO:0016671">
    <property type="term" value="F:oxidoreductase activity, acting on a sulfur group of donors, disulfide as acceptor"/>
    <property type="evidence" value="ECO:0000314"/>
    <property type="project" value="UniProtKB"/>
</dbReference>
<dbReference type="GO" id="GO:0046983">
    <property type="term" value="F:protein dimerization activity"/>
    <property type="evidence" value="ECO:0007669"/>
    <property type="project" value="InterPro"/>
</dbReference>
<dbReference type="GO" id="GO:0051085">
    <property type="term" value="P:chaperone cofactor-dependent protein refolding"/>
    <property type="evidence" value="ECO:0000318"/>
    <property type="project" value="GO_Central"/>
</dbReference>
<dbReference type="GO" id="GO:0010286">
    <property type="term" value="P:heat acclimation"/>
    <property type="evidence" value="ECO:0000315"/>
    <property type="project" value="UniProtKB"/>
</dbReference>
<dbReference type="GO" id="GO:0051259">
    <property type="term" value="P:protein complex oligomerization"/>
    <property type="evidence" value="ECO:0000314"/>
    <property type="project" value="UniProtKB"/>
</dbReference>
<dbReference type="GO" id="GO:0006457">
    <property type="term" value="P:protein folding"/>
    <property type="evidence" value="ECO:0000314"/>
    <property type="project" value="UniProtKB"/>
</dbReference>
<dbReference type="CDD" id="cd14438">
    <property type="entry name" value="Hip_N"/>
    <property type="match status" value="1"/>
</dbReference>
<dbReference type="CDD" id="cd02947">
    <property type="entry name" value="TRX_family"/>
    <property type="match status" value="1"/>
</dbReference>
<dbReference type="FunFam" id="1.25.40.10:FF:000112">
    <property type="entry name" value="FAM10 family protein"/>
    <property type="match status" value="1"/>
</dbReference>
<dbReference type="FunFam" id="6.10.250.3420:FF:000001">
    <property type="entry name" value="Hsc70-interacting protein-like protein"/>
    <property type="match status" value="1"/>
</dbReference>
<dbReference type="FunFam" id="3.40.30.10:FF:000240">
    <property type="entry name" value="TPR repeat-containing thioredoxin TDX"/>
    <property type="match status" value="1"/>
</dbReference>
<dbReference type="Gene3D" id="6.10.250.3420">
    <property type="match status" value="1"/>
</dbReference>
<dbReference type="Gene3D" id="3.40.30.10">
    <property type="entry name" value="Glutaredoxin"/>
    <property type="match status" value="1"/>
</dbReference>
<dbReference type="Gene3D" id="1.25.40.10">
    <property type="entry name" value="Tetratricopeptide repeat domain"/>
    <property type="match status" value="1"/>
</dbReference>
<dbReference type="InterPro" id="IPR034649">
    <property type="entry name" value="Hip_N"/>
</dbReference>
<dbReference type="InterPro" id="IPR036249">
    <property type="entry name" value="Thioredoxin-like_sf"/>
</dbReference>
<dbReference type="InterPro" id="IPR017937">
    <property type="entry name" value="Thioredoxin_CS"/>
</dbReference>
<dbReference type="InterPro" id="IPR013766">
    <property type="entry name" value="Thioredoxin_domain"/>
</dbReference>
<dbReference type="InterPro" id="IPR011990">
    <property type="entry name" value="TPR-like_helical_dom_sf"/>
</dbReference>
<dbReference type="InterPro" id="IPR019734">
    <property type="entry name" value="TPR_rpt"/>
</dbReference>
<dbReference type="PANTHER" id="PTHR45883">
    <property type="entry name" value="HSC70-INTERACTING PROTEIN"/>
    <property type="match status" value="1"/>
</dbReference>
<dbReference type="PANTHER" id="PTHR45883:SF7">
    <property type="entry name" value="TPR REPEAT-CONTAINING THIOREDOXIN TDX"/>
    <property type="match status" value="1"/>
</dbReference>
<dbReference type="Pfam" id="PF18253">
    <property type="entry name" value="HipN"/>
    <property type="match status" value="1"/>
</dbReference>
<dbReference type="Pfam" id="PF00085">
    <property type="entry name" value="Thioredoxin"/>
    <property type="match status" value="1"/>
</dbReference>
<dbReference type="SMART" id="SM00028">
    <property type="entry name" value="TPR"/>
    <property type="match status" value="3"/>
</dbReference>
<dbReference type="SUPFAM" id="SSF52833">
    <property type="entry name" value="Thioredoxin-like"/>
    <property type="match status" value="1"/>
</dbReference>
<dbReference type="SUPFAM" id="SSF48452">
    <property type="entry name" value="TPR-like"/>
    <property type="match status" value="1"/>
</dbReference>
<dbReference type="PROSITE" id="PS00194">
    <property type="entry name" value="THIOREDOXIN_1"/>
    <property type="match status" value="1"/>
</dbReference>
<dbReference type="PROSITE" id="PS51352">
    <property type="entry name" value="THIOREDOXIN_2"/>
    <property type="match status" value="1"/>
</dbReference>
<dbReference type="PROSITE" id="PS50005">
    <property type="entry name" value="TPR"/>
    <property type="match status" value="3"/>
</dbReference>
<dbReference type="PROSITE" id="PS50293">
    <property type="entry name" value="TPR_REGION"/>
    <property type="match status" value="1"/>
</dbReference>
<gene>
    <name type="primary">TDX</name>
    <name type="ordered locus">At3g17880/At3g17870</name>
    <name type="ORF">MEB5.10/MEB5.9</name>
</gene>
<evidence type="ECO:0000250" key="1"/>
<evidence type="ECO:0000255" key="2">
    <source>
        <dbReference type="PROSITE-ProRule" id="PRU00691"/>
    </source>
</evidence>
<evidence type="ECO:0000256" key="3">
    <source>
        <dbReference type="SAM" id="MobiDB-lite"/>
    </source>
</evidence>
<evidence type="ECO:0000269" key="4">
    <source>
    </source>
</evidence>
<evidence type="ECO:0000269" key="5">
    <source>
    </source>
</evidence>
<evidence type="ECO:0000305" key="6"/>
<evidence type="ECO:0007744" key="7">
    <source>
    </source>
</evidence>
<keyword id="KW-0007">Acetylation</keyword>
<keyword id="KW-0025">Alternative splicing</keyword>
<keyword id="KW-0143">Chaperone</keyword>
<keyword id="KW-1015">Disulfide bond</keyword>
<keyword id="KW-0249">Electron transport</keyword>
<keyword id="KW-0676">Redox-active center</keyword>
<keyword id="KW-1185">Reference proteome</keyword>
<keyword id="KW-0677">Repeat</keyword>
<keyword id="KW-0802">TPR repeat</keyword>
<keyword id="KW-0813">Transport</keyword>
<organism>
    <name type="scientific">Arabidopsis thaliana</name>
    <name type="common">Mouse-ear cress</name>
    <dbReference type="NCBI Taxonomy" id="3702"/>
    <lineage>
        <taxon>Eukaryota</taxon>
        <taxon>Viridiplantae</taxon>
        <taxon>Streptophyta</taxon>
        <taxon>Embryophyta</taxon>
        <taxon>Tracheophyta</taxon>
        <taxon>Spermatophyta</taxon>
        <taxon>Magnoliopsida</taxon>
        <taxon>eudicotyledons</taxon>
        <taxon>Gunneridae</taxon>
        <taxon>Pentapetalae</taxon>
        <taxon>rosids</taxon>
        <taxon>malvids</taxon>
        <taxon>Brassicales</taxon>
        <taxon>Brassicaceae</taxon>
        <taxon>Camelineae</taxon>
        <taxon>Arabidopsis</taxon>
    </lineage>
</organism>
<feature type="initiator methionine" description="Removed" evidence="7">
    <location>
        <position position="1"/>
    </location>
</feature>
<feature type="chain" id="PRO_0000394548" description="TPR repeat-containing thioredoxin TDX">
    <location>
        <begin position="2"/>
        <end position="380"/>
    </location>
</feature>
<feature type="repeat" description="TPR 1">
    <location>
        <begin position="112"/>
        <end position="145"/>
    </location>
</feature>
<feature type="repeat" description="TPR 2">
    <location>
        <begin position="147"/>
        <end position="179"/>
    </location>
</feature>
<feature type="repeat" description="TPR 3">
    <location>
        <begin position="181"/>
        <end position="213"/>
    </location>
</feature>
<feature type="domain" description="Thioredoxin" evidence="2">
    <location>
        <begin position="252"/>
        <end position="378"/>
    </location>
</feature>
<feature type="region of interest" description="Disordered" evidence="3">
    <location>
        <begin position="49"/>
        <end position="115"/>
    </location>
</feature>
<feature type="region of interest" description="Disordered" evidence="3">
    <location>
        <begin position="240"/>
        <end position="265"/>
    </location>
</feature>
<feature type="compositionally biased region" description="Basic and acidic residues" evidence="3">
    <location>
        <begin position="49"/>
        <end position="59"/>
    </location>
</feature>
<feature type="compositionally biased region" description="Acidic residues" evidence="3">
    <location>
        <begin position="69"/>
        <end position="91"/>
    </location>
</feature>
<feature type="compositionally biased region" description="Basic and acidic residues" evidence="3">
    <location>
        <begin position="106"/>
        <end position="115"/>
    </location>
</feature>
<feature type="compositionally biased region" description="Basic and acidic residues" evidence="3">
    <location>
        <begin position="240"/>
        <end position="263"/>
    </location>
</feature>
<feature type="active site" description="Nucleophile" evidence="1">
    <location>
        <position position="304"/>
    </location>
</feature>
<feature type="active site" description="Nucleophile" evidence="1">
    <location>
        <position position="307"/>
    </location>
</feature>
<feature type="site" description="Contributes to redox potential value" evidence="1">
    <location>
        <position position="305"/>
    </location>
</feature>
<feature type="site" description="Contributes to redox potential value" evidence="1">
    <location>
        <position position="306"/>
    </location>
</feature>
<feature type="modified residue" description="N-acetylvaline" evidence="7">
    <location>
        <position position="2"/>
    </location>
</feature>
<feature type="disulfide bond" description="Redox-active" evidence="6">
    <location>
        <begin position="304"/>
        <end position="307"/>
    </location>
</feature>
<feature type="splice variant" id="VSP_039289" description="In isoform 2." evidence="6">
    <location>
        <begin position="50"/>
        <end position="56"/>
    </location>
</feature>
<feature type="mutagenesis site" description="Loss of disulfide reductase activity." evidence="5">
    <original>C</original>
    <variation>S</variation>
    <location>
        <position position="304"/>
    </location>
</feature>
<feature type="mutagenesis site" description="Loss of disulfide reductase activity." evidence="5">
    <original>C</original>
    <variation>S</variation>
    <location>
        <position position="307"/>
    </location>
</feature>
<feature type="sequence conflict" description="In Ref. 5; AAM60989." evidence="6" ref="5">
    <original>V</original>
    <variation>F</variation>
    <location>
        <position position="324"/>
    </location>
</feature>